<name>CCA_MARN8</name>
<feature type="chain" id="PRO_1000054318" description="CCA-adding enzyme">
    <location>
        <begin position="1"/>
        <end position="373"/>
    </location>
</feature>
<feature type="binding site" evidence="1">
    <location>
        <position position="8"/>
    </location>
    <ligand>
        <name>ATP</name>
        <dbReference type="ChEBI" id="CHEBI:30616"/>
    </ligand>
</feature>
<feature type="binding site" evidence="1">
    <location>
        <position position="8"/>
    </location>
    <ligand>
        <name>CTP</name>
        <dbReference type="ChEBI" id="CHEBI:37563"/>
    </ligand>
</feature>
<feature type="binding site" evidence="1">
    <location>
        <position position="11"/>
    </location>
    <ligand>
        <name>ATP</name>
        <dbReference type="ChEBI" id="CHEBI:30616"/>
    </ligand>
</feature>
<feature type="binding site" evidence="1">
    <location>
        <position position="11"/>
    </location>
    <ligand>
        <name>CTP</name>
        <dbReference type="ChEBI" id="CHEBI:37563"/>
    </ligand>
</feature>
<feature type="binding site" evidence="1">
    <location>
        <position position="21"/>
    </location>
    <ligand>
        <name>Mg(2+)</name>
        <dbReference type="ChEBI" id="CHEBI:18420"/>
    </ligand>
</feature>
<feature type="binding site" evidence="1">
    <location>
        <position position="23"/>
    </location>
    <ligand>
        <name>Mg(2+)</name>
        <dbReference type="ChEBI" id="CHEBI:18420"/>
    </ligand>
</feature>
<feature type="binding site" evidence="1">
    <location>
        <position position="91"/>
    </location>
    <ligand>
        <name>ATP</name>
        <dbReference type="ChEBI" id="CHEBI:30616"/>
    </ligand>
</feature>
<feature type="binding site" evidence="1">
    <location>
        <position position="91"/>
    </location>
    <ligand>
        <name>CTP</name>
        <dbReference type="ChEBI" id="CHEBI:37563"/>
    </ligand>
</feature>
<feature type="binding site" evidence="1">
    <location>
        <position position="137"/>
    </location>
    <ligand>
        <name>ATP</name>
        <dbReference type="ChEBI" id="CHEBI:30616"/>
    </ligand>
</feature>
<feature type="binding site" evidence="1">
    <location>
        <position position="137"/>
    </location>
    <ligand>
        <name>CTP</name>
        <dbReference type="ChEBI" id="CHEBI:37563"/>
    </ligand>
</feature>
<feature type="binding site" evidence="1">
    <location>
        <position position="140"/>
    </location>
    <ligand>
        <name>ATP</name>
        <dbReference type="ChEBI" id="CHEBI:30616"/>
    </ligand>
</feature>
<feature type="binding site" evidence="1">
    <location>
        <position position="140"/>
    </location>
    <ligand>
        <name>CTP</name>
        <dbReference type="ChEBI" id="CHEBI:37563"/>
    </ligand>
</feature>
<keyword id="KW-0067">ATP-binding</keyword>
<keyword id="KW-0460">Magnesium</keyword>
<keyword id="KW-0479">Metal-binding</keyword>
<keyword id="KW-0547">Nucleotide-binding</keyword>
<keyword id="KW-0548">Nucleotidyltransferase</keyword>
<keyword id="KW-0692">RNA repair</keyword>
<keyword id="KW-0694">RNA-binding</keyword>
<keyword id="KW-0808">Transferase</keyword>
<keyword id="KW-0819">tRNA processing</keyword>
<gene>
    <name evidence="1" type="primary">cca</name>
    <name type="ordered locus">Maqu_3160</name>
</gene>
<proteinExistence type="inferred from homology"/>
<evidence type="ECO:0000255" key="1">
    <source>
        <dbReference type="HAMAP-Rule" id="MF_01262"/>
    </source>
</evidence>
<organism>
    <name type="scientific">Marinobacter nauticus (strain ATCC 700491 / DSM 11845 / VT8)</name>
    <name type="common">Marinobacter aquaeolei</name>
    <dbReference type="NCBI Taxonomy" id="351348"/>
    <lineage>
        <taxon>Bacteria</taxon>
        <taxon>Pseudomonadati</taxon>
        <taxon>Pseudomonadota</taxon>
        <taxon>Gammaproteobacteria</taxon>
        <taxon>Pseudomonadales</taxon>
        <taxon>Marinobacteraceae</taxon>
        <taxon>Marinobacter</taxon>
    </lineage>
</organism>
<protein>
    <recommendedName>
        <fullName evidence="1">CCA-adding enzyme</fullName>
        <ecNumber evidence="1">2.7.7.72</ecNumber>
    </recommendedName>
    <alternativeName>
        <fullName evidence="1">CCA tRNA nucleotidyltransferase</fullName>
    </alternativeName>
    <alternativeName>
        <fullName evidence="1">tRNA CCA-pyrophosphorylase</fullName>
    </alternativeName>
    <alternativeName>
        <fullName evidence="1">tRNA adenylyl-/cytidylyl- transferase</fullName>
    </alternativeName>
    <alternativeName>
        <fullName evidence="1">tRNA nucleotidyltransferase</fullName>
    </alternativeName>
    <alternativeName>
        <fullName evidence="1">tRNA-NT</fullName>
    </alternativeName>
</protein>
<comment type="function">
    <text evidence="1">Catalyzes the addition and repair of the essential 3'-terminal CCA sequence in tRNAs without using a nucleic acid template. Adds these three nucleotides in the order of C, C, and A to the tRNA nucleotide-73, using CTP and ATP as substrates and producing inorganic pyrophosphate. tRNA 3'-terminal CCA addition is required both for tRNA processing and repair. Also involved in tRNA surveillance by mediating tandem CCA addition to generate a CCACCA at the 3' terminus of unstable tRNAs. While stable tRNAs receive only 3'-terminal CCA, unstable tRNAs are marked with CCACCA and rapidly degraded.</text>
</comment>
<comment type="catalytic activity">
    <reaction evidence="1">
        <text>a tRNA precursor + 2 CTP + ATP = a tRNA with a 3' CCA end + 3 diphosphate</text>
        <dbReference type="Rhea" id="RHEA:14433"/>
        <dbReference type="Rhea" id="RHEA-COMP:10465"/>
        <dbReference type="Rhea" id="RHEA-COMP:10468"/>
        <dbReference type="ChEBI" id="CHEBI:30616"/>
        <dbReference type="ChEBI" id="CHEBI:33019"/>
        <dbReference type="ChEBI" id="CHEBI:37563"/>
        <dbReference type="ChEBI" id="CHEBI:74896"/>
        <dbReference type="ChEBI" id="CHEBI:83071"/>
        <dbReference type="EC" id="2.7.7.72"/>
    </reaction>
</comment>
<comment type="catalytic activity">
    <reaction evidence="1">
        <text>a tRNA with a 3' CCA end + 2 CTP + ATP = a tRNA with a 3' CCACCA end + 3 diphosphate</text>
        <dbReference type="Rhea" id="RHEA:76235"/>
        <dbReference type="Rhea" id="RHEA-COMP:10468"/>
        <dbReference type="Rhea" id="RHEA-COMP:18655"/>
        <dbReference type="ChEBI" id="CHEBI:30616"/>
        <dbReference type="ChEBI" id="CHEBI:33019"/>
        <dbReference type="ChEBI" id="CHEBI:37563"/>
        <dbReference type="ChEBI" id="CHEBI:83071"/>
        <dbReference type="ChEBI" id="CHEBI:195187"/>
    </reaction>
    <physiologicalReaction direction="left-to-right" evidence="1">
        <dbReference type="Rhea" id="RHEA:76236"/>
    </physiologicalReaction>
</comment>
<comment type="cofactor">
    <cofactor evidence="1">
        <name>Mg(2+)</name>
        <dbReference type="ChEBI" id="CHEBI:18420"/>
    </cofactor>
</comment>
<comment type="miscellaneous">
    <text evidence="1">A single active site specifically recognizes both ATP and CTP and is responsible for their addition.</text>
</comment>
<comment type="similarity">
    <text evidence="1">Belongs to the tRNA nucleotidyltransferase/poly(A) polymerase family. Bacterial CCA-adding enzyme type 2 subfamily.</text>
</comment>
<dbReference type="EC" id="2.7.7.72" evidence="1"/>
<dbReference type="EMBL" id="CP000514">
    <property type="protein sequence ID" value="ABM20234.1"/>
    <property type="molecule type" value="Genomic_DNA"/>
</dbReference>
<dbReference type="RefSeq" id="WP_011786602.1">
    <property type="nucleotide sequence ID" value="NC_008740.1"/>
</dbReference>
<dbReference type="SMR" id="A1U5G5"/>
<dbReference type="STRING" id="351348.Maqu_3160"/>
<dbReference type="KEGG" id="maq:Maqu_3160"/>
<dbReference type="eggNOG" id="COG0617">
    <property type="taxonomic scope" value="Bacteria"/>
</dbReference>
<dbReference type="HOGENOM" id="CLU_015961_1_0_6"/>
<dbReference type="OrthoDB" id="9805698at2"/>
<dbReference type="Proteomes" id="UP000000998">
    <property type="component" value="Chromosome"/>
</dbReference>
<dbReference type="GO" id="GO:0005524">
    <property type="term" value="F:ATP binding"/>
    <property type="evidence" value="ECO:0007669"/>
    <property type="project" value="UniProtKB-UniRule"/>
</dbReference>
<dbReference type="GO" id="GO:0004810">
    <property type="term" value="F:CCA tRNA nucleotidyltransferase activity"/>
    <property type="evidence" value="ECO:0007669"/>
    <property type="project" value="UniProtKB-UniRule"/>
</dbReference>
<dbReference type="GO" id="GO:0000287">
    <property type="term" value="F:magnesium ion binding"/>
    <property type="evidence" value="ECO:0007669"/>
    <property type="project" value="UniProtKB-UniRule"/>
</dbReference>
<dbReference type="GO" id="GO:0000049">
    <property type="term" value="F:tRNA binding"/>
    <property type="evidence" value="ECO:0007669"/>
    <property type="project" value="UniProtKB-UniRule"/>
</dbReference>
<dbReference type="GO" id="GO:0042245">
    <property type="term" value="P:RNA repair"/>
    <property type="evidence" value="ECO:0007669"/>
    <property type="project" value="UniProtKB-KW"/>
</dbReference>
<dbReference type="GO" id="GO:0001680">
    <property type="term" value="P:tRNA 3'-terminal CCA addition"/>
    <property type="evidence" value="ECO:0007669"/>
    <property type="project" value="UniProtKB-UniRule"/>
</dbReference>
<dbReference type="CDD" id="cd05398">
    <property type="entry name" value="NT_ClassII-CCAase"/>
    <property type="match status" value="1"/>
</dbReference>
<dbReference type="Gene3D" id="3.30.460.10">
    <property type="entry name" value="Beta Polymerase, domain 2"/>
    <property type="match status" value="1"/>
</dbReference>
<dbReference type="Gene3D" id="1.10.3090.10">
    <property type="entry name" value="cca-adding enzyme, domain 2"/>
    <property type="match status" value="1"/>
</dbReference>
<dbReference type="HAMAP" id="MF_01262">
    <property type="entry name" value="CCA_bact_type2"/>
    <property type="match status" value="1"/>
</dbReference>
<dbReference type="InterPro" id="IPR012006">
    <property type="entry name" value="CCA_bact"/>
</dbReference>
<dbReference type="InterPro" id="IPR043519">
    <property type="entry name" value="NT_sf"/>
</dbReference>
<dbReference type="InterPro" id="IPR002646">
    <property type="entry name" value="PolA_pol_head_dom"/>
</dbReference>
<dbReference type="InterPro" id="IPR032828">
    <property type="entry name" value="PolyA_RNA-bd"/>
</dbReference>
<dbReference type="InterPro" id="IPR050124">
    <property type="entry name" value="tRNA_CCA-adding_enzyme"/>
</dbReference>
<dbReference type="PANTHER" id="PTHR47545">
    <property type="entry name" value="MULTIFUNCTIONAL CCA PROTEIN"/>
    <property type="match status" value="1"/>
</dbReference>
<dbReference type="PANTHER" id="PTHR47545:SF1">
    <property type="entry name" value="MULTIFUNCTIONAL CCA PROTEIN"/>
    <property type="match status" value="1"/>
</dbReference>
<dbReference type="Pfam" id="PF01743">
    <property type="entry name" value="PolyA_pol"/>
    <property type="match status" value="1"/>
</dbReference>
<dbReference type="Pfam" id="PF12627">
    <property type="entry name" value="PolyA_pol_RNAbd"/>
    <property type="match status" value="1"/>
</dbReference>
<dbReference type="PIRSF" id="PIRSF000813">
    <property type="entry name" value="CCA_bact"/>
    <property type="match status" value="1"/>
</dbReference>
<dbReference type="SUPFAM" id="SSF81301">
    <property type="entry name" value="Nucleotidyltransferase"/>
    <property type="match status" value="1"/>
</dbReference>
<dbReference type="SUPFAM" id="SSF81891">
    <property type="entry name" value="Poly A polymerase C-terminal region-like"/>
    <property type="match status" value="1"/>
</dbReference>
<reference key="1">
    <citation type="journal article" date="2011" name="Appl. Environ. Microbiol.">
        <title>Genomic potential of Marinobacter aquaeolei, a biogeochemical 'opportunitroph'.</title>
        <authorList>
            <person name="Singer E."/>
            <person name="Webb E.A."/>
            <person name="Nelson W.C."/>
            <person name="Heidelberg J.F."/>
            <person name="Ivanova N."/>
            <person name="Pati A."/>
            <person name="Edwards K.J."/>
        </authorList>
    </citation>
    <scope>NUCLEOTIDE SEQUENCE [LARGE SCALE GENOMIC DNA]</scope>
    <source>
        <strain>ATCC 700491 / DSM 11845 / VT8</strain>
    </source>
</reference>
<sequence>MQTYLVGGAVRDKLLGLGVKDRDWVVVGATPEDMIQRGFKQVGADFPVFLHPDTGEEYALARTERKQGRGYHGFSVYSAPDVSLEDDLRRRDLTINAMAETENGDLVDPFNGHADLEQKKLRHVSEAFAEDPLRILRTARFAARLQPLGFSICRETMALMRQMVTSGELGDLVPERVWQEVQRALHEQAPGVFFDVLRELGALQVLIPELTDEQPFRQGLSALQCIHRKQGSTAQHYAALLSGVPEPDAVARAKAMKSPNDCRELTHLVGLFMAQLNGASPETRLTPELAMELLDKADFWRRPDRFGVLLGTLACTLQSEPDHLIQQLELAAHRAQSVTPHPFLQKGIQGKALGEAIRKERVARITEALHLPE</sequence>
<accession>A1U5G5</accession>